<name>NS7A_BCHK3</name>
<keyword id="KW-1015">Disulfide bond</keyword>
<keyword id="KW-1077">G0/G1 host cell cycle checkpoint dysregulation by virus</keyword>
<keyword id="KW-1038">Host endoplasmic reticulum</keyword>
<keyword id="KW-1040">Host Golgi apparatus</keyword>
<keyword id="KW-1043">Host membrane</keyword>
<keyword id="KW-0945">Host-virus interaction</keyword>
<keyword id="KW-0472">Membrane</keyword>
<keyword id="KW-1121">Modulation of host cell cycle by virus</keyword>
<keyword id="KW-0732">Signal</keyword>
<keyword id="KW-0812">Transmembrane</keyword>
<keyword id="KW-1133">Transmembrane helix</keyword>
<keyword id="KW-0946">Virion</keyword>
<gene>
    <name type="ORF">7a</name>
</gene>
<organism>
    <name type="scientific">Bat coronavirus HKU3</name>
    <name type="common">BtCoV</name>
    <name type="synonym">SARS-like coronavirus HKU3</name>
    <dbReference type="NCBI Taxonomy" id="442736"/>
    <lineage>
        <taxon>Viruses</taxon>
        <taxon>Riboviria</taxon>
        <taxon>Orthornavirae</taxon>
        <taxon>Pisuviricota</taxon>
        <taxon>Pisoniviricetes</taxon>
        <taxon>Nidovirales</taxon>
        <taxon>Cornidovirineae</taxon>
        <taxon>Coronaviridae</taxon>
        <taxon>Orthocoronavirinae</taxon>
        <taxon>Betacoronavirus</taxon>
        <taxon>Sarbecovirus</taxon>
        <taxon>Severe acute respiratory syndrome coronavirus</taxon>
    </lineage>
</organism>
<reference key="1">
    <citation type="journal article" date="2005" name="Proc. Natl. Acad. Sci. U.S.A.">
        <title>Severe acute respiratory syndrome coronavirus-like virus in Chinese horseshoe bats.</title>
        <authorList>
            <person name="Lau S.K.P."/>
            <person name="Woo P.C.Y."/>
            <person name="Li K.S.M."/>
            <person name="Huang Y."/>
            <person name="Tsoi H.-W."/>
            <person name="Wong B.H.L."/>
            <person name="Wong S.S.Y."/>
            <person name="Leung S.-Y."/>
            <person name="Chan K.-H."/>
            <person name="Yuen K.-Y."/>
        </authorList>
    </citation>
    <scope>NUCLEOTIDE SEQUENCE [GENOMIC RNA]</scope>
    <source>
        <strain>Isolate HKU3-1</strain>
    </source>
</reference>
<proteinExistence type="inferred from homology"/>
<evidence type="ECO:0000250" key="1"/>
<evidence type="ECO:0000255" key="2"/>
<evidence type="ECO:0000255" key="3">
    <source>
        <dbReference type="PROSITE-ProRule" id="PRU01267"/>
    </source>
</evidence>
<accession>Q3LZX7</accession>
<feature type="signal peptide" evidence="1">
    <location>
        <begin position="1"/>
        <end position="15"/>
    </location>
</feature>
<feature type="chain" id="PRO_0000292947" description="Protein 7a">
    <location>
        <begin position="16"/>
        <end position="122"/>
    </location>
</feature>
<feature type="topological domain" description="Virion surface" evidence="2">
    <location>
        <begin position="16"/>
        <end position="96"/>
    </location>
</feature>
<feature type="transmembrane region" description="Helical" evidence="2">
    <location>
        <begin position="97"/>
        <end position="117"/>
    </location>
</feature>
<feature type="topological domain" description="Intravirion" evidence="2">
    <location>
        <begin position="118"/>
        <end position="122"/>
    </location>
</feature>
<feature type="domain" description="X4e" evidence="3">
    <location>
        <begin position="16"/>
        <end position="81"/>
    </location>
</feature>
<feature type="short sequence motif" description="Di-lysine motif" evidence="1">
    <location>
        <begin position="118"/>
        <end position="122"/>
    </location>
</feature>
<feature type="disulfide bond" evidence="3">
    <location>
        <begin position="23"/>
        <end position="58"/>
    </location>
</feature>
<feature type="disulfide bond" evidence="3">
    <location>
        <begin position="35"/>
        <end position="67"/>
    </location>
</feature>
<organismHost>
    <name type="scientific">Rhinolophus sinicus</name>
    <name type="common">Chinese rufous horseshoe bat</name>
    <dbReference type="NCBI Taxonomy" id="89399"/>
</organismHost>
<sequence>MKIILFLTLIALATCELYHYQECVRGTTVLLKEPCPSGTYEGNSPFHPLADNKFALTCSSTHFAFACADGTRHTYQLRARSVSPKLFIRQEEVYQELYSPLFLIVAALVFIILCFTIKRKTE</sequence>
<comment type="function">
    <text evidence="1">Non-structural protein which is dispensable for virus replication in cell culture.</text>
</comment>
<comment type="subunit">
    <text evidence="1">Interacts with the spike glycoprotein, M protein, E protein and the accessory protein 3.</text>
</comment>
<comment type="subcellular location">
    <subcellularLocation>
        <location evidence="1">Virion</location>
    </subcellularLocation>
    <subcellularLocation>
        <location evidence="1">Host endoplasmic reticulum membrane</location>
        <topology evidence="1">Single-pass membrane protein</topology>
    </subcellularLocation>
    <subcellularLocation>
        <location evidence="1">Host endoplasmic reticulum-Golgi intermediate compartment membrane</location>
        <topology evidence="1">Single-pass type I membrane protein</topology>
    </subcellularLocation>
    <subcellularLocation>
        <location evidence="1">Host Golgi apparatus membrane</location>
        <topology evidence="1">Single-pass membrane protein</topology>
    </subcellularLocation>
</comment>
<comment type="domain">
    <text evidence="1">The di-lysine motif confers endoplasmic reticulum localization for type I membrane proteins.</text>
</comment>
<comment type="miscellaneous">
    <text>Bat coronavirus HKU3 is highly similar to SARS-CoV (SARS-like).</text>
</comment>
<dbReference type="EMBL" id="DQ022305">
    <property type="protein sequence ID" value="AAY88871.1"/>
    <property type="molecule type" value="Genomic_RNA"/>
</dbReference>
<dbReference type="BMRB" id="Q3LZX7"/>
<dbReference type="SMR" id="Q3LZX7"/>
<dbReference type="Proteomes" id="UP000007450">
    <property type="component" value="Segment"/>
</dbReference>
<dbReference type="GO" id="GO:0044167">
    <property type="term" value="C:host cell endoplasmic reticulum membrane"/>
    <property type="evidence" value="ECO:0007669"/>
    <property type="project" value="UniProtKB-SubCell"/>
</dbReference>
<dbReference type="GO" id="GO:0044173">
    <property type="term" value="C:host cell endoplasmic reticulum-Golgi intermediate compartment membrane"/>
    <property type="evidence" value="ECO:0007669"/>
    <property type="project" value="UniProtKB-SubCell"/>
</dbReference>
<dbReference type="GO" id="GO:0044178">
    <property type="term" value="C:host cell Golgi membrane"/>
    <property type="evidence" value="ECO:0007669"/>
    <property type="project" value="UniProtKB-SubCell"/>
</dbReference>
<dbReference type="GO" id="GO:0016020">
    <property type="term" value="C:membrane"/>
    <property type="evidence" value="ECO:0007669"/>
    <property type="project" value="UniProtKB-KW"/>
</dbReference>
<dbReference type="GO" id="GO:0044423">
    <property type="term" value="C:virion component"/>
    <property type="evidence" value="ECO:0007669"/>
    <property type="project" value="UniProtKB-KW"/>
</dbReference>
<dbReference type="GO" id="GO:0039646">
    <property type="term" value="P:symbiont-mediated perturbation of host cell cycle G0/G1 transition checkpoint"/>
    <property type="evidence" value="ECO:0007669"/>
    <property type="project" value="UniProtKB-KW"/>
</dbReference>
<dbReference type="GO" id="GO:0044071">
    <property type="term" value="P:symbiont-mediated perturbation of host cell cycle progression"/>
    <property type="evidence" value="ECO:0007669"/>
    <property type="project" value="UniProtKB-KW"/>
</dbReference>
<dbReference type="FunFam" id="2.60.40.1550:FF:000001">
    <property type="entry name" value="ORF8"/>
    <property type="match status" value="1"/>
</dbReference>
<dbReference type="Gene3D" id="2.60.40.1550">
    <property type="entry name" value="SARS coronavirus X4"/>
    <property type="match status" value="1"/>
</dbReference>
<dbReference type="InterPro" id="IPR014888">
    <property type="entry name" value="ORF7a_SARS-CoV-like"/>
</dbReference>
<dbReference type="InterPro" id="IPR044871">
    <property type="entry name" value="ORF7a_SARS-CoV-like_X4e"/>
</dbReference>
<dbReference type="InterPro" id="IPR036495">
    <property type="entry name" value="ORF7a_sf_CoV"/>
</dbReference>
<dbReference type="Pfam" id="PF08779">
    <property type="entry name" value="bCoV_NS7A"/>
    <property type="match status" value="1"/>
</dbReference>
<dbReference type="SUPFAM" id="SSF117066">
    <property type="entry name" value="Accessory protein X4 (ORF8, ORF7a)"/>
    <property type="match status" value="1"/>
</dbReference>
<dbReference type="PROSITE" id="PS51919">
    <property type="entry name" value="X4E"/>
    <property type="match status" value="1"/>
</dbReference>
<protein>
    <recommendedName>
        <fullName>Protein 7a</fullName>
    </recommendedName>
    <alternativeName>
        <fullName>Accessory protein 7a</fullName>
    </alternativeName>
</protein>